<sequence length="57" mass="6538">MAVPKKRTSMSKKRIRRNIWKKKGYWAAVKALSLAKSISTGHSKSFFVRQTSNKALE</sequence>
<comment type="subcellular location">
    <subcellularLocation>
        <location>Plastid</location>
        <location>Chloroplast</location>
    </subcellularLocation>
</comment>
<comment type="similarity">
    <text evidence="1">Belongs to the bacterial ribosomal protein bL32 family.</text>
</comment>
<geneLocation type="chloroplast"/>
<dbReference type="EMBL" id="DQ899947">
    <property type="protein sequence ID" value="ABI32557.1"/>
    <property type="molecule type" value="Genomic_DNA"/>
</dbReference>
<dbReference type="RefSeq" id="YP_740250.1">
    <property type="nucleotide sequence ID" value="NC_008326.1"/>
</dbReference>
<dbReference type="SMR" id="Q0G9H1"/>
<dbReference type="GeneID" id="4266681"/>
<dbReference type="GO" id="GO:0009507">
    <property type="term" value="C:chloroplast"/>
    <property type="evidence" value="ECO:0007669"/>
    <property type="project" value="UniProtKB-SubCell"/>
</dbReference>
<dbReference type="GO" id="GO:0015934">
    <property type="term" value="C:large ribosomal subunit"/>
    <property type="evidence" value="ECO:0007669"/>
    <property type="project" value="InterPro"/>
</dbReference>
<dbReference type="GO" id="GO:0003735">
    <property type="term" value="F:structural constituent of ribosome"/>
    <property type="evidence" value="ECO:0007669"/>
    <property type="project" value="InterPro"/>
</dbReference>
<dbReference type="GO" id="GO:0006412">
    <property type="term" value="P:translation"/>
    <property type="evidence" value="ECO:0007669"/>
    <property type="project" value="UniProtKB-UniRule"/>
</dbReference>
<dbReference type="HAMAP" id="MF_00340">
    <property type="entry name" value="Ribosomal_bL32"/>
    <property type="match status" value="1"/>
</dbReference>
<dbReference type="InterPro" id="IPR002677">
    <property type="entry name" value="Ribosomal_bL32"/>
</dbReference>
<dbReference type="InterPro" id="IPR044958">
    <property type="entry name" value="Ribosomal_bL32_plant/cyanobact"/>
</dbReference>
<dbReference type="InterPro" id="IPR011332">
    <property type="entry name" value="Ribosomal_zn-bd"/>
</dbReference>
<dbReference type="PANTHER" id="PTHR36083">
    <property type="entry name" value="50S RIBOSOMAL PROTEIN L32, CHLOROPLASTIC"/>
    <property type="match status" value="1"/>
</dbReference>
<dbReference type="PANTHER" id="PTHR36083:SF1">
    <property type="entry name" value="LARGE RIBOSOMAL SUBUNIT PROTEIN BL32C"/>
    <property type="match status" value="1"/>
</dbReference>
<dbReference type="Pfam" id="PF01783">
    <property type="entry name" value="Ribosomal_L32p"/>
    <property type="match status" value="1"/>
</dbReference>
<dbReference type="SUPFAM" id="SSF57829">
    <property type="entry name" value="Zn-binding ribosomal proteins"/>
    <property type="match status" value="1"/>
</dbReference>
<accession>Q0G9H1</accession>
<proteinExistence type="inferred from homology"/>
<reference key="1">
    <citation type="journal article" date="2006" name="BMC Evol. Biol.">
        <title>Complete plastid genome sequences of Drimys, Liriodendron, and Piper: implications for the phylogenetic relationships of magnoliids.</title>
        <authorList>
            <person name="Cai Z."/>
            <person name="Penaflor C."/>
            <person name="Kuehl J.V."/>
            <person name="Leebens-Mack J."/>
            <person name="Carlson J.E."/>
            <person name="dePamphilis C.W."/>
            <person name="Boore J.L."/>
            <person name="Jansen R.K."/>
        </authorList>
    </citation>
    <scope>NUCLEOTIDE SEQUENCE [LARGE SCALE GENOMIC DNA]</scope>
</reference>
<evidence type="ECO:0000255" key="1">
    <source>
        <dbReference type="HAMAP-Rule" id="MF_00340"/>
    </source>
</evidence>
<evidence type="ECO:0000305" key="2"/>
<protein>
    <recommendedName>
        <fullName evidence="1">Large ribosomal subunit protein bL32c</fullName>
    </recommendedName>
    <alternativeName>
        <fullName evidence="2">50S ribosomal protein L32, chloroplastic</fullName>
    </alternativeName>
</protein>
<keyword id="KW-0150">Chloroplast</keyword>
<keyword id="KW-0934">Plastid</keyword>
<keyword id="KW-0687">Ribonucleoprotein</keyword>
<keyword id="KW-0689">Ribosomal protein</keyword>
<gene>
    <name evidence="1" type="primary">rpl32</name>
</gene>
<organism>
    <name type="scientific">Liriodendron tulipifera</name>
    <name type="common">Tuliptree</name>
    <name type="synonym">Tulip poplar</name>
    <dbReference type="NCBI Taxonomy" id="3415"/>
    <lineage>
        <taxon>Eukaryota</taxon>
        <taxon>Viridiplantae</taxon>
        <taxon>Streptophyta</taxon>
        <taxon>Embryophyta</taxon>
        <taxon>Tracheophyta</taxon>
        <taxon>Spermatophyta</taxon>
        <taxon>Magnoliopsida</taxon>
        <taxon>Magnoliidae</taxon>
        <taxon>Magnoliales</taxon>
        <taxon>Magnoliaceae</taxon>
        <taxon>Liriodendron</taxon>
    </lineage>
</organism>
<name>RK32_LIRTU</name>
<feature type="chain" id="PRO_0000276475" description="Large ribosomal subunit protein bL32c">
    <location>
        <begin position="1"/>
        <end position="57"/>
    </location>
</feature>